<comment type="function">
    <text evidence="1">Catalyzes the interconversion of methylthioribose-1-phosphate (MTR-1-P) into methylthioribulose-1-phosphate (MTRu-1-P).</text>
</comment>
<comment type="catalytic activity">
    <reaction evidence="1">
        <text>5-(methylsulfanyl)-alpha-D-ribose 1-phosphate = 5-(methylsulfanyl)-D-ribulose 1-phosphate</text>
        <dbReference type="Rhea" id="RHEA:19989"/>
        <dbReference type="ChEBI" id="CHEBI:58533"/>
        <dbReference type="ChEBI" id="CHEBI:58548"/>
        <dbReference type="EC" id="5.3.1.23"/>
    </reaction>
</comment>
<comment type="pathway">
    <text evidence="1">Amino-acid biosynthesis; L-methionine biosynthesis via salvage pathway; L-methionine from S-methyl-5-thio-alpha-D-ribose 1-phosphate: step 1/6.</text>
</comment>
<comment type="similarity">
    <text evidence="2">Belongs to the eIF-2B alpha/beta/delta subunits family. MtnA subfamily.</text>
</comment>
<gene>
    <name evidence="1" type="primary">mtnA</name>
    <name type="ordered locus">PSPPH_3668</name>
</gene>
<proteinExistence type="inferred from homology"/>
<name>MTNA_PSE14</name>
<protein>
    <recommendedName>
        <fullName evidence="1">Methylthioribose-1-phosphate isomerase</fullName>
        <shortName evidence="1">M1Pi</shortName>
        <shortName evidence="1">MTR-1-P isomerase</shortName>
        <ecNumber evidence="1">5.3.1.23</ecNumber>
    </recommendedName>
    <alternativeName>
        <fullName evidence="1">S-methyl-5-thioribose-1-phosphate isomerase</fullName>
    </alternativeName>
</protein>
<dbReference type="EC" id="5.3.1.23" evidence="1"/>
<dbReference type="EMBL" id="CP000058">
    <property type="protein sequence ID" value="AAZ37638.1"/>
    <property type="molecule type" value="Genomic_DNA"/>
</dbReference>
<dbReference type="RefSeq" id="WP_011169224.1">
    <property type="nucleotide sequence ID" value="NC_005773.3"/>
</dbReference>
<dbReference type="SMR" id="Q48FM6"/>
<dbReference type="KEGG" id="psp:PSPPH_3668"/>
<dbReference type="eggNOG" id="COG0182">
    <property type="taxonomic scope" value="Bacteria"/>
</dbReference>
<dbReference type="HOGENOM" id="CLU_016218_1_2_6"/>
<dbReference type="UniPathway" id="UPA00904">
    <property type="reaction ID" value="UER00874"/>
</dbReference>
<dbReference type="Proteomes" id="UP000000551">
    <property type="component" value="Chromosome"/>
</dbReference>
<dbReference type="GO" id="GO:0046523">
    <property type="term" value="F:S-methyl-5-thioribose-1-phosphate isomerase activity"/>
    <property type="evidence" value="ECO:0007669"/>
    <property type="project" value="UniProtKB-UniRule"/>
</dbReference>
<dbReference type="GO" id="GO:0019509">
    <property type="term" value="P:L-methionine salvage from methylthioadenosine"/>
    <property type="evidence" value="ECO:0007669"/>
    <property type="project" value="UniProtKB-UniRule"/>
</dbReference>
<dbReference type="FunFam" id="1.20.120.420:FF:000008">
    <property type="entry name" value="Methylthioribose-1-phosphate isomerase"/>
    <property type="match status" value="1"/>
</dbReference>
<dbReference type="FunFam" id="3.40.50.10470:FF:000006">
    <property type="entry name" value="Methylthioribose-1-phosphate isomerase"/>
    <property type="match status" value="1"/>
</dbReference>
<dbReference type="Gene3D" id="1.20.120.420">
    <property type="entry name" value="translation initiation factor eif-2b, domain 1"/>
    <property type="match status" value="1"/>
</dbReference>
<dbReference type="Gene3D" id="3.40.50.10470">
    <property type="entry name" value="Translation initiation factor eif-2b, domain 2"/>
    <property type="match status" value="1"/>
</dbReference>
<dbReference type="HAMAP" id="MF_01678">
    <property type="entry name" value="Salvage_MtnA"/>
    <property type="match status" value="1"/>
</dbReference>
<dbReference type="InterPro" id="IPR000649">
    <property type="entry name" value="IF-2B-related"/>
</dbReference>
<dbReference type="InterPro" id="IPR005251">
    <property type="entry name" value="IF-M1Pi"/>
</dbReference>
<dbReference type="InterPro" id="IPR042529">
    <property type="entry name" value="IF_2B-like_C"/>
</dbReference>
<dbReference type="InterPro" id="IPR011559">
    <property type="entry name" value="Initiation_fac_2B_a/b/d"/>
</dbReference>
<dbReference type="InterPro" id="IPR027363">
    <property type="entry name" value="M1Pi_N"/>
</dbReference>
<dbReference type="InterPro" id="IPR037171">
    <property type="entry name" value="NagB/RpiA_transferase-like"/>
</dbReference>
<dbReference type="NCBIfam" id="TIGR00524">
    <property type="entry name" value="eIF-2B_rel"/>
    <property type="match status" value="1"/>
</dbReference>
<dbReference type="NCBIfam" id="NF004326">
    <property type="entry name" value="PRK05720.1"/>
    <property type="match status" value="1"/>
</dbReference>
<dbReference type="NCBIfam" id="TIGR00512">
    <property type="entry name" value="salvage_mtnA"/>
    <property type="match status" value="1"/>
</dbReference>
<dbReference type="PANTHER" id="PTHR43475">
    <property type="entry name" value="METHYLTHIORIBOSE-1-PHOSPHATE ISOMERASE"/>
    <property type="match status" value="1"/>
</dbReference>
<dbReference type="PANTHER" id="PTHR43475:SF1">
    <property type="entry name" value="METHYLTHIORIBOSE-1-PHOSPHATE ISOMERASE"/>
    <property type="match status" value="1"/>
</dbReference>
<dbReference type="Pfam" id="PF01008">
    <property type="entry name" value="IF-2B"/>
    <property type="match status" value="1"/>
</dbReference>
<dbReference type="SUPFAM" id="SSF100950">
    <property type="entry name" value="NagB/RpiA/CoA transferase-like"/>
    <property type="match status" value="1"/>
</dbReference>
<accession>Q48FM6</accession>
<feature type="chain" id="PRO_0000357230" description="Methylthioribose-1-phosphate isomerase">
    <location>
        <begin position="1"/>
        <end position="358"/>
    </location>
</feature>
<feature type="active site" description="Proton donor" evidence="1">
    <location>
        <position position="246"/>
    </location>
</feature>
<feature type="binding site" evidence="1">
    <location>
        <begin position="54"/>
        <end position="56"/>
    </location>
    <ligand>
        <name>substrate</name>
    </ligand>
</feature>
<feature type="binding site" evidence="1">
    <location>
        <position position="96"/>
    </location>
    <ligand>
        <name>substrate</name>
    </ligand>
</feature>
<feature type="binding site" evidence="1">
    <location>
        <position position="205"/>
    </location>
    <ligand>
        <name>substrate</name>
    </ligand>
</feature>
<feature type="binding site" evidence="1">
    <location>
        <begin position="256"/>
        <end position="257"/>
    </location>
    <ligand>
        <name>substrate</name>
    </ligand>
</feature>
<feature type="site" description="Transition state stabilizer" evidence="1">
    <location>
        <position position="166"/>
    </location>
</feature>
<keyword id="KW-0028">Amino-acid biosynthesis</keyword>
<keyword id="KW-0413">Isomerase</keyword>
<keyword id="KW-0486">Methionine biosynthesis</keyword>
<reference key="1">
    <citation type="journal article" date="2005" name="J. Bacteriol.">
        <title>Whole-genome sequence analysis of Pseudomonas syringae pv. phaseolicola 1448A reveals divergence among pathovars in genes involved in virulence and transposition.</title>
        <authorList>
            <person name="Joardar V."/>
            <person name="Lindeberg M."/>
            <person name="Jackson R.W."/>
            <person name="Selengut J."/>
            <person name="Dodson R."/>
            <person name="Brinkac L.M."/>
            <person name="Daugherty S.C."/>
            <person name="DeBoy R.T."/>
            <person name="Durkin A.S."/>
            <person name="Gwinn Giglio M."/>
            <person name="Madupu R."/>
            <person name="Nelson W.C."/>
            <person name="Rosovitz M.J."/>
            <person name="Sullivan S.A."/>
            <person name="Crabtree J."/>
            <person name="Creasy T."/>
            <person name="Davidsen T.M."/>
            <person name="Haft D.H."/>
            <person name="Zafar N."/>
            <person name="Zhou L."/>
            <person name="Halpin R."/>
            <person name="Holley T."/>
            <person name="Khouri H.M."/>
            <person name="Feldblyum T.V."/>
            <person name="White O."/>
            <person name="Fraser C.M."/>
            <person name="Chatterjee A.K."/>
            <person name="Cartinhour S."/>
            <person name="Schneider D."/>
            <person name="Mansfield J.W."/>
            <person name="Collmer A."/>
            <person name="Buell R."/>
        </authorList>
    </citation>
    <scope>NUCLEOTIDE SEQUENCE [LARGE SCALE GENOMIC DNA]</scope>
    <source>
        <strain>1448A / Race 6</strain>
    </source>
</reference>
<evidence type="ECO:0000255" key="1">
    <source>
        <dbReference type="HAMAP-Rule" id="MF_01678"/>
    </source>
</evidence>
<evidence type="ECO:0000305" key="2"/>
<organism>
    <name type="scientific">Pseudomonas savastanoi pv. phaseolicola (strain 1448A / Race 6)</name>
    <name type="common">Pseudomonas syringae pv. phaseolicola (strain 1448A / Race 6)</name>
    <dbReference type="NCBI Taxonomy" id="264730"/>
    <lineage>
        <taxon>Bacteria</taxon>
        <taxon>Pseudomonadati</taxon>
        <taxon>Pseudomonadota</taxon>
        <taxon>Gammaproteobacteria</taxon>
        <taxon>Pseudomonadales</taxon>
        <taxon>Pseudomonadaceae</taxon>
        <taxon>Pseudomonas</taxon>
    </lineage>
</organism>
<sequence length="358" mass="39145">MRDRLLAAEKVKAIDWRDDALYLLDQRVLPFEEVWHRYTTAEGVAEAIRTMVVRGAPAIGISAAYGAVLGARARIAEGGDWYPALEEDMQLLADSRPTAVNLFWALNRMRDRLMRVKDGDDPLVALEAESVAIHLSDREANLTMAQLGADLIRRHQGNLQTVLTHCNTGALATGGFGTALGVIRAAHLEGMIERVYADETRPWLQGSRLTAWELANEGIPVTLNADSAAAHLMRTKGITWVIVGADRITANGDVANKIGTYQLAVAAMHHGVRFMVVAPSSTIDMEMASGDDIIIEERDGRELLEVGGQRVGAQVEAFNPVFDVTPADLIDAIVTEKGIVERPDTARMAQLMSRKHLH</sequence>